<proteinExistence type="evidence at protein level"/>
<evidence type="ECO:0000255" key="1">
    <source>
        <dbReference type="PROSITE-ProRule" id="PRU00253"/>
    </source>
</evidence>
<evidence type="ECO:0000305" key="2"/>
<evidence type="ECO:0007829" key="3">
    <source>
        <dbReference type="PDB" id="2FYI"/>
    </source>
</evidence>
<accession>Q47083</accession>
<accession>P76353</accession>
<feature type="chain" id="PRO_0000105602" description="HTH-type transcriptional regulator cbl">
    <location>
        <begin position="1"/>
        <end position="316"/>
    </location>
</feature>
<feature type="domain" description="HTH lysR-type" evidence="1">
    <location>
        <begin position="1"/>
        <end position="59"/>
    </location>
</feature>
<feature type="DNA-binding region" description="H-T-H motif" evidence="1">
    <location>
        <begin position="19"/>
        <end position="38"/>
    </location>
</feature>
<feature type="sequence conflict" description="In Ref. 1; AAA99929." evidence="2" ref="1">
    <original>A</original>
    <variation>R</variation>
    <location>
        <position position="143"/>
    </location>
</feature>
<feature type="turn" evidence="3">
    <location>
        <begin position="88"/>
        <end position="90"/>
    </location>
</feature>
<feature type="strand" evidence="3">
    <location>
        <begin position="93"/>
        <end position="99"/>
    </location>
</feature>
<feature type="helix" evidence="3">
    <location>
        <begin position="101"/>
        <end position="106"/>
    </location>
</feature>
<feature type="helix" evidence="3">
    <location>
        <begin position="108"/>
        <end position="118"/>
    </location>
</feature>
<feature type="strand" evidence="3">
    <location>
        <begin position="122"/>
        <end position="128"/>
    </location>
</feature>
<feature type="helix" evidence="3">
    <location>
        <begin position="131"/>
        <end position="139"/>
    </location>
</feature>
<feature type="strand" evidence="3">
    <location>
        <begin position="144"/>
        <end position="152"/>
    </location>
</feature>
<feature type="strand" evidence="3">
    <location>
        <begin position="158"/>
        <end position="166"/>
    </location>
</feature>
<feature type="strand" evidence="3">
    <location>
        <begin position="168"/>
        <end position="173"/>
    </location>
</feature>
<feature type="helix" evidence="3">
    <location>
        <begin position="177"/>
        <end position="179"/>
    </location>
</feature>
<feature type="strand" evidence="3">
    <location>
        <begin position="181"/>
        <end position="183"/>
    </location>
</feature>
<feature type="helix" evidence="3">
    <location>
        <begin position="186"/>
        <end position="189"/>
    </location>
</feature>
<feature type="strand" evidence="3">
    <location>
        <begin position="194"/>
        <end position="197"/>
    </location>
</feature>
<feature type="helix" evidence="3">
    <location>
        <begin position="204"/>
        <end position="213"/>
    </location>
</feature>
<feature type="strand" evidence="3">
    <location>
        <begin position="220"/>
        <end position="226"/>
    </location>
</feature>
<feature type="helix" evidence="3">
    <location>
        <begin position="227"/>
        <end position="236"/>
    </location>
</feature>
<feature type="strand" evidence="3">
    <location>
        <begin position="240"/>
        <end position="244"/>
    </location>
</feature>
<feature type="helix" evidence="3">
    <location>
        <begin position="245"/>
        <end position="248"/>
    </location>
</feature>
<feature type="strand" evidence="3">
    <location>
        <begin position="256"/>
        <end position="259"/>
    </location>
</feature>
<feature type="turn" evidence="3">
    <location>
        <begin position="262"/>
        <end position="264"/>
    </location>
</feature>
<feature type="strand" evidence="3">
    <location>
        <begin position="268"/>
        <end position="275"/>
    </location>
</feature>
<feature type="helix" evidence="3">
    <location>
        <begin position="282"/>
        <end position="291"/>
    </location>
</feature>
<feature type="strand" evidence="3">
    <location>
        <begin position="293"/>
        <end position="295"/>
    </location>
</feature>
<feature type="helix" evidence="3">
    <location>
        <begin position="297"/>
        <end position="305"/>
    </location>
</feature>
<sequence length="316" mass="35856">MNFQQLKIIREAARQDYNLTEVANMLFTSQSGVSRHIRELEDELGIEIFVRRGKRLLGMTEPGKALLVIAERILNEASNVRRLADLFTNDTSGVLTIATTHTQARYSLPEVIKAFRELFPEVRLELIQGTPQEIATLLQNGEADIGIASERLSNDPQLVAFPWFRWHHSLLVPHDHPLTQISPLTLESIAKWPLITYRQGITGRSRIDDAFARKGLLADIVLSAQDSDVIKTYVALGLGIGLVAEQSSGEQEEENLIRLDTRHLFDANTVWLGLKRGQLQRNYVWRFLELCNAGLSVEDIKRQVMESSEEEIDYQI</sequence>
<reference key="1">
    <citation type="journal article" date="1995" name="Gene">
        <title>A new gene, cbl, encoding a member of the LysR family of transcriptional regulators belongs to Escherichia coli cys regulon.</title>
        <authorList>
            <person name="Iwanicka-Nowicka R."/>
            <person name="Hryniewicz M.M."/>
        </authorList>
    </citation>
    <scope>NUCLEOTIDE SEQUENCE [GENOMIC DNA]</scope>
    <source>
        <strain>K12</strain>
    </source>
</reference>
<reference key="2">
    <citation type="journal article" date="1996" name="DNA Res.">
        <title>A 460-kb DNA sequence of the Escherichia coli K-12 genome corresponding to the 40.1-50.0 min region on the linkage map.</title>
        <authorList>
            <person name="Itoh T."/>
            <person name="Aiba H."/>
            <person name="Baba T."/>
            <person name="Fujita K."/>
            <person name="Hayashi K."/>
            <person name="Inada T."/>
            <person name="Isono K."/>
            <person name="Kasai H."/>
            <person name="Kimura S."/>
            <person name="Kitakawa M."/>
            <person name="Kitagawa M."/>
            <person name="Makino K."/>
            <person name="Miki T."/>
            <person name="Mizobuchi K."/>
            <person name="Mori H."/>
            <person name="Mori T."/>
            <person name="Motomura K."/>
            <person name="Nakade S."/>
            <person name="Nakamura Y."/>
            <person name="Nashimoto H."/>
            <person name="Nishio Y."/>
            <person name="Oshima T."/>
            <person name="Saito N."/>
            <person name="Sampei G."/>
            <person name="Seki Y."/>
            <person name="Sivasundaram S."/>
            <person name="Tagami H."/>
            <person name="Takeda J."/>
            <person name="Takemoto K."/>
            <person name="Wada C."/>
            <person name="Yamamoto Y."/>
            <person name="Horiuchi T."/>
        </authorList>
    </citation>
    <scope>NUCLEOTIDE SEQUENCE [LARGE SCALE GENOMIC DNA]</scope>
    <source>
        <strain>K12 / W3110 / ATCC 27325 / DSM 5911</strain>
    </source>
</reference>
<reference key="3">
    <citation type="journal article" date="1997" name="Science">
        <title>The complete genome sequence of Escherichia coli K-12.</title>
        <authorList>
            <person name="Blattner F.R."/>
            <person name="Plunkett G. III"/>
            <person name="Bloch C.A."/>
            <person name="Perna N.T."/>
            <person name="Burland V."/>
            <person name="Riley M."/>
            <person name="Collado-Vides J."/>
            <person name="Glasner J.D."/>
            <person name="Rode C.K."/>
            <person name="Mayhew G.F."/>
            <person name="Gregor J."/>
            <person name="Davis N.W."/>
            <person name="Kirkpatrick H.A."/>
            <person name="Goeden M.A."/>
            <person name="Rose D.J."/>
            <person name="Mau B."/>
            <person name="Shao Y."/>
        </authorList>
    </citation>
    <scope>NUCLEOTIDE SEQUENCE [LARGE SCALE GENOMIC DNA]</scope>
    <source>
        <strain>K12 / MG1655 / ATCC 47076</strain>
    </source>
</reference>
<reference key="4">
    <citation type="journal article" date="2006" name="Mol. Syst. Biol.">
        <title>Highly accurate genome sequences of Escherichia coli K-12 strains MG1655 and W3110.</title>
        <authorList>
            <person name="Hayashi K."/>
            <person name="Morooka N."/>
            <person name="Yamamoto Y."/>
            <person name="Fujita K."/>
            <person name="Isono K."/>
            <person name="Choi S."/>
            <person name="Ohtsubo E."/>
            <person name="Baba T."/>
            <person name="Wanner B.L."/>
            <person name="Mori H."/>
            <person name="Horiuchi T."/>
        </authorList>
    </citation>
    <scope>NUCLEOTIDE SEQUENCE [LARGE SCALE GENOMIC DNA]</scope>
    <source>
        <strain>K12 / W3110 / ATCC 27325 / DSM 5911</strain>
    </source>
</reference>
<organism>
    <name type="scientific">Escherichia coli (strain K12)</name>
    <dbReference type="NCBI Taxonomy" id="83333"/>
    <lineage>
        <taxon>Bacteria</taxon>
        <taxon>Pseudomonadati</taxon>
        <taxon>Pseudomonadota</taxon>
        <taxon>Gammaproteobacteria</taxon>
        <taxon>Enterobacterales</taxon>
        <taxon>Enterobacteriaceae</taxon>
        <taxon>Escherichia</taxon>
    </lineage>
</organism>
<dbReference type="EMBL" id="L31639">
    <property type="protein sequence ID" value="AAA99929.1"/>
    <property type="molecule type" value="Genomic_DNA"/>
</dbReference>
<dbReference type="EMBL" id="U00096">
    <property type="protein sequence ID" value="AAC75049.1"/>
    <property type="molecule type" value="Genomic_DNA"/>
</dbReference>
<dbReference type="EMBL" id="AP009048">
    <property type="protein sequence ID" value="BAA15805.1"/>
    <property type="molecule type" value="Genomic_DNA"/>
</dbReference>
<dbReference type="PIR" id="C64963">
    <property type="entry name" value="C64963"/>
</dbReference>
<dbReference type="RefSeq" id="NP_416492.1">
    <property type="nucleotide sequence ID" value="NC_000913.3"/>
</dbReference>
<dbReference type="RefSeq" id="WP_001011008.1">
    <property type="nucleotide sequence ID" value="NZ_LN832404.1"/>
</dbReference>
<dbReference type="PDB" id="2FYI">
    <property type="method" value="X-ray"/>
    <property type="resolution" value="2.80 A"/>
    <property type="chains" value="A/B/C/D=88-307"/>
</dbReference>
<dbReference type="PDBsum" id="2FYI"/>
<dbReference type="SMR" id="Q47083"/>
<dbReference type="BioGRID" id="4262113">
    <property type="interactions" value="147"/>
</dbReference>
<dbReference type="DIP" id="DIP-9248N"/>
<dbReference type="FunCoup" id="Q47083">
    <property type="interactions" value="36"/>
</dbReference>
<dbReference type="IntAct" id="Q47083">
    <property type="interactions" value="2"/>
</dbReference>
<dbReference type="STRING" id="511145.b1987"/>
<dbReference type="PaxDb" id="511145-b1987"/>
<dbReference type="EnsemblBacteria" id="AAC75049">
    <property type="protein sequence ID" value="AAC75049"/>
    <property type="gene ID" value="b1987"/>
</dbReference>
<dbReference type="GeneID" id="946502"/>
<dbReference type="KEGG" id="ecj:JW1966"/>
<dbReference type="KEGG" id="eco:b1987"/>
<dbReference type="KEGG" id="ecoc:C3026_11215"/>
<dbReference type="PATRIC" id="fig|1411691.4.peg.266"/>
<dbReference type="EchoBASE" id="EB4012"/>
<dbReference type="eggNOG" id="COG0583">
    <property type="taxonomic scope" value="Bacteria"/>
</dbReference>
<dbReference type="HOGENOM" id="CLU_039613_6_2_6"/>
<dbReference type="InParanoid" id="Q47083"/>
<dbReference type="OMA" id="AIKQCVI"/>
<dbReference type="OrthoDB" id="5297026at2"/>
<dbReference type="PhylomeDB" id="Q47083"/>
<dbReference type="BioCyc" id="EcoCyc:G7071-MONOMER"/>
<dbReference type="EvolutionaryTrace" id="Q47083"/>
<dbReference type="PRO" id="PR:Q47083"/>
<dbReference type="Proteomes" id="UP000000625">
    <property type="component" value="Chromosome"/>
</dbReference>
<dbReference type="GO" id="GO:0003700">
    <property type="term" value="F:DNA-binding transcription factor activity"/>
    <property type="evidence" value="ECO:0007669"/>
    <property type="project" value="InterPro"/>
</dbReference>
<dbReference type="GO" id="GO:0000976">
    <property type="term" value="F:transcription cis-regulatory region binding"/>
    <property type="evidence" value="ECO:0000318"/>
    <property type="project" value="GO_Central"/>
</dbReference>
<dbReference type="GO" id="GO:0019344">
    <property type="term" value="P:cysteine biosynthetic process"/>
    <property type="evidence" value="ECO:0000318"/>
    <property type="project" value="GO_Central"/>
</dbReference>
<dbReference type="GO" id="GO:0045883">
    <property type="term" value="P:positive regulation of sulfur utilization"/>
    <property type="evidence" value="ECO:0000314"/>
    <property type="project" value="EcoliWiki"/>
</dbReference>
<dbReference type="GO" id="GO:0006355">
    <property type="term" value="P:regulation of DNA-templated transcription"/>
    <property type="evidence" value="ECO:0000318"/>
    <property type="project" value="GO_Central"/>
</dbReference>
<dbReference type="CDD" id="cd08444">
    <property type="entry name" value="PBP2_Cbl"/>
    <property type="match status" value="1"/>
</dbReference>
<dbReference type="FunFam" id="1.10.10.10:FF:000021">
    <property type="entry name" value="HTH-type transcriptional regulator CysB"/>
    <property type="match status" value="1"/>
</dbReference>
<dbReference type="FunFam" id="3.40.190.10:FF:000037">
    <property type="entry name" value="HTH-type transcriptional regulator CysB"/>
    <property type="match status" value="1"/>
</dbReference>
<dbReference type="Gene3D" id="3.40.190.10">
    <property type="entry name" value="Periplasmic binding protein-like II"/>
    <property type="match status" value="2"/>
</dbReference>
<dbReference type="Gene3D" id="1.10.10.10">
    <property type="entry name" value="Winged helix-like DNA-binding domain superfamily/Winged helix DNA-binding domain"/>
    <property type="match status" value="1"/>
</dbReference>
<dbReference type="InterPro" id="IPR037408">
    <property type="entry name" value="Cbl_PBP2"/>
</dbReference>
<dbReference type="InterPro" id="IPR005119">
    <property type="entry name" value="LysR_subst-bd"/>
</dbReference>
<dbReference type="InterPro" id="IPR000847">
    <property type="entry name" value="Tscrpt_reg_HTH_LysR"/>
</dbReference>
<dbReference type="InterPro" id="IPR036388">
    <property type="entry name" value="WH-like_DNA-bd_sf"/>
</dbReference>
<dbReference type="InterPro" id="IPR036390">
    <property type="entry name" value="WH_DNA-bd_sf"/>
</dbReference>
<dbReference type="NCBIfam" id="NF009324">
    <property type="entry name" value="PRK12679.1"/>
    <property type="match status" value="1"/>
</dbReference>
<dbReference type="NCBIfam" id="NF009327">
    <property type="entry name" value="PRK12684.1"/>
    <property type="match status" value="1"/>
</dbReference>
<dbReference type="PANTHER" id="PTHR30126">
    <property type="entry name" value="HTH-TYPE TRANSCRIPTIONAL REGULATOR"/>
    <property type="match status" value="1"/>
</dbReference>
<dbReference type="PANTHER" id="PTHR30126:SF6">
    <property type="entry name" value="HTH-TYPE TRANSCRIPTIONAL REGULATOR CYSB-RELATED"/>
    <property type="match status" value="1"/>
</dbReference>
<dbReference type="Pfam" id="PF00126">
    <property type="entry name" value="HTH_1"/>
    <property type="match status" value="1"/>
</dbReference>
<dbReference type="Pfam" id="PF03466">
    <property type="entry name" value="LysR_substrate"/>
    <property type="match status" value="1"/>
</dbReference>
<dbReference type="PRINTS" id="PR00039">
    <property type="entry name" value="HTHLYSR"/>
</dbReference>
<dbReference type="SUPFAM" id="SSF53850">
    <property type="entry name" value="Periplasmic binding protein-like II"/>
    <property type="match status" value="1"/>
</dbReference>
<dbReference type="SUPFAM" id="SSF46785">
    <property type="entry name" value="Winged helix' DNA-binding domain"/>
    <property type="match status" value="1"/>
</dbReference>
<dbReference type="PROSITE" id="PS50931">
    <property type="entry name" value="HTH_LYSR"/>
    <property type="match status" value="1"/>
</dbReference>
<protein>
    <recommendedName>
        <fullName>HTH-type transcriptional regulator cbl</fullName>
    </recommendedName>
</protein>
<comment type="function">
    <text>May be an accessory regulatory protein within the cys regulon.</text>
</comment>
<comment type="similarity">
    <text evidence="2">Belongs to the LysR transcriptional regulatory family.</text>
</comment>
<name>CBL_ECOLI</name>
<gene>
    <name type="primary">cbl</name>
    <name type="ordered locus">b1987</name>
    <name type="ordered locus">JW1966</name>
</gene>
<keyword id="KW-0002">3D-structure</keyword>
<keyword id="KW-0238">DNA-binding</keyword>
<keyword id="KW-1185">Reference proteome</keyword>
<keyword id="KW-0804">Transcription</keyword>
<keyword id="KW-0805">Transcription regulation</keyword>